<reference evidence="17" key="1">
    <citation type="journal article" date="1997" name="Eur. J. Biochem.">
        <title>Isolation and properties of Drosophila melanogaster ferritin--molecular cloning of a cDNA that encodes one subunit, and localization of the gene on the third chromosome.</title>
        <authorList>
            <person name="Charlesworth A."/>
            <person name="Georgieva T."/>
            <person name="Gospodov I."/>
            <person name="Law J.H."/>
            <person name="Dunkov B.C."/>
            <person name="Ralcheva N."/>
            <person name="Barillas-Mury C."/>
            <person name="Ralchev K."/>
            <person name="Kafatos F.C."/>
        </authorList>
    </citation>
    <scope>NUCLEOTIDE SEQUENCE [MRNA]</scope>
    <scope>PROTEIN SEQUENCE OF 20-29</scope>
    <scope>SUBUNIT</scope>
    <source>
        <strain evidence="17">Canton-S</strain>
    </source>
</reference>
<reference evidence="20" key="2">
    <citation type="journal article" date="1998" name="FEBS Lett.">
        <title>Drosophila ferritin mRNA: alternative RNA splicing regulates the presence of the iron-responsive element.</title>
        <authorList>
            <person name="Lind M.I."/>
            <person name="Ekengren S."/>
            <person name="Melefors O."/>
            <person name="Soederhaell K."/>
        </authorList>
    </citation>
    <scope>NUCLEOTIDE SEQUENCE [MRNA]</scope>
    <scope>TISSUE SPECIFICITY</scope>
    <scope>DEVELOPMENTAL STAGE</scope>
    <source>
        <strain evidence="20">Canton-S</strain>
    </source>
</reference>
<reference evidence="22" key="3">
    <citation type="journal article" date="2000" name="Science">
        <title>The genome sequence of Drosophila melanogaster.</title>
        <authorList>
            <person name="Adams M.D."/>
            <person name="Celniker S.E."/>
            <person name="Holt R.A."/>
            <person name="Evans C.A."/>
            <person name="Gocayne J.D."/>
            <person name="Amanatides P.G."/>
            <person name="Scherer S.E."/>
            <person name="Li P.W."/>
            <person name="Hoskins R.A."/>
            <person name="Galle R.F."/>
            <person name="George R.A."/>
            <person name="Lewis S.E."/>
            <person name="Richards S."/>
            <person name="Ashburner M."/>
            <person name="Henderson S.N."/>
            <person name="Sutton G.G."/>
            <person name="Wortman J.R."/>
            <person name="Yandell M.D."/>
            <person name="Zhang Q."/>
            <person name="Chen L.X."/>
            <person name="Brandon R.C."/>
            <person name="Rogers Y.-H.C."/>
            <person name="Blazej R.G."/>
            <person name="Champe M."/>
            <person name="Pfeiffer B.D."/>
            <person name="Wan K.H."/>
            <person name="Doyle C."/>
            <person name="Baxter E.G."/>
            <person name="Helt G."/>
            <person name="Nelson C.R."/>
            <person name="Miklos G.L.G."/>
            <person name="Abril J.F."/>
            <person name="Agbayani A."/>
            <person name="An H.-J."/>
            <person name="Andrews-Pfannkoch C."/>
            <person name="Baldwin D."/>
            <person name="Ballew R.M."/>
            <person name="Basu A."/>
            <person name="Baxendale J."/>
            <person name="Bayraktaroglu L."/>
            <person name="Beasley E.M."/>
            <person name="Beeson K.Y."/>
            <person name="Benos P.V."/>
            <person name="Berman B.P."/>
            <person name="Bhandari D."/>
            <person name="Bolshakov S."/>
            <person name="Borkova D."/>
            <person name="Botchan M.R."/>
            <person name="Bouck J."/>
            <person name="Brokstein P."/>
            <person name="Brottier P."/>
            <person name="Burtis K.C."/>
            <person name="Busam D.A."/>
            <person name="Butler H."/>
            <person name="Cadieu E."/>
            <person name="Center A."/>
            <person name="Chandra I."/>
            <person name="Cherry J.M."/>
            <person name="Cawley S."/>
            <person name="Dahlke C."/>
            <person name="Davenport L.B."/>
            <person name="Davies P."/>
            <person name="de Pablos B."/>
            <person name="Delcher A."/>
            <person name="Deng Z."/>
            <person name="Mays A.D."/>
            <person name="Dew I."/>
            <person name="Dietz S.M."/>
            <person name="Dodson K."/>
            <person name="Doup L.E."/>
            <person name="Downes M."/>
            <person name="Dugan-Rocha S."/>
            <person name="Dunkov B.C."/>
            <person name="Dunn P."/>
            <person name="Durbin K.J."/>
            <person name="Evangelista C.C."/>
            <person name="Ferraz C."/>
            <person name="Ferriera S."/>
            <person name="Fleischmann W."/>
            <person name="Fosler C."/>
            <person name="Gabrielian A.E."/>
            <person name="Garg N.S."/>
            <person name="Gelbart W.M."/>
            <person name="Glasser K."/>
            <person name="Glodek A."/>
            <person name="Gong F."/>
            <person name="Gorrell J.H."/>
            <person name="Gu Z."/>
            <person name="Guan P."/>
            <person name="Harris M."/>
            <person name="Harris N.L."/>
            <person name="Harvey D.A."/>
            <person name="Heiman T.J."/>
            <person name="Hernandez J.R."/>
            <person name="Houck J."/>
            <person name="Hostin D."/>
            <person name="Houston K.A."/>
            <person name="Howland T.J."/>
            <person name="Wei M.-H."/>
            <person name="Ibegwam C."/>
            <person name="Jalali M."/>
            <person name="Kalush F."/>
            <person name="Karpen G.H."/>
            <person name="Ke Z."/>
            <person name="Kennison J.A."/>
            <person name="Ketchum K.A."/>
            <person name="Kimmel B.E."/>
            <person name="Kodira C.D."/>
            <person name="Kraft C.L."/>
            <person name="Kravitz S."/>
            <person name="Kulp D."/>
            <person name="Lai Z."/>
            <person name="Lasko P."/>
            <person name="Lei Y."/>
            <person name="Levitsky A.A."/>
            <person name="Li J.H."/>
            <person name="Li Z."/>
            <person name="Liang Y."/>
            <person name="Lin X."/>
            <person name="Liu X."/>
            <person name="Mattei B."/>
            <person name="McIntosh T.C."/>
            <person name="McLeod M.P."/>
            <person name="McPherson D."/>
            <person name="Merkulov G."/>
            <person name="Milshina N.V."/>
            <person name="Mobarry C."/>
            <person name="Morris J."/>
            <person name="Moshrefi A."/>
            <person name="Mount S.M."/>
            <person name="Moy M."/>
            <person name="Murphy B."/>
            <person name="Murphy L."/>
            <person name="Muzny D.M."/>
            <person name="Nelson D.L."/>
            <person name="Nelson D.R."/>
            <person name="Nelson K.A."/>
            <person name="Nixon K."/>
            <person name="Nusskern D.R."/>
            <person name="Pacleb J.M."/>
            <person name="Palazzolo M."/>
            <person name="Pittman G.S."/>
            <person name="Pan S."/>
            <person name="Pollard J."/>
            <person name="Puri V."/>
            <person name="Reese M.G."/>
            <person name="Reinert K."/>
            <person name="Remington K."/>
            <person name="Saunders R.D.C."/>
            <person name="Scheeler F."/>
            <person name="Shen H."/>
            <person name="Shue B.C."/>
            <person name="Siden-Kiamos I."/>
            <person name="Simpson M."/>
            <person name="Skupski M.P."/>
            <person name="Smith T.J."/>
            <person name="Spier E."/>
            <person name="Spradling A.C."/>
            <person name="Stapleton M."/>
            <person name="Strong R."/>
            <person name="Sun E."/>
            <person name="Svirskas R."/>
            <person name="Tector C."/>
            <person name="Turner R."/>
            <person name="Venter E."/>
            <person name="Wang A.H."/>
            <person name="Wang X."/>
            <person name="Wang Z.-Y."/>
            <person name="Wassarman D.A."/>
            <person name="Weinstock G.M."/>
            <person name="Weissenbach J."/>
            <person name="Williams S.M."/>
            <person name="Woodage T."/>
            <person name="Worley K.C."/>
            <person name="Wu D."/>
            <person name="Yang S."/>
            <person name="Yao Q.A."/>
            <person name="Ye J."/>
            <person name="Yeh R.-F."/>
            <person name="Zaveri J.S."/>
            <person name="Zhan M."/>
            <person name="Zhang G."/>
            <person name="Zhao Q."/>
            <person name="Zheng L."/>
            <person name="Zheng X.H."/>
            <person name="Zhong F.N."/>
            <person name="Zhong W."/>
            <person name="Zhou X."/>
            <person name="Zhu S.C."/>
            <person name="Zhu X."/>
            <person name="Smith H.O."/>
            <person name="Gibbs R.A."/>
            <person name="Myers E.W."/>
            <person name="Rubin G.M."/>
            <person name="Venter J.C."/>
        </authorList>
    </citation>
    <scope>NUCLEOTIDE SEQUENCE [LARGE SCALE GENOMIC DNA]</scope>
    <source>
        <strain evidence="22">Berkeley</strain>
    </source>
</reference>
<reference evidence="22" key="4">
    <citation type="journal article" date="2002" name="Genome Biol.">
        <title>Annotation of the Drosophila melanogaster euchromatic genome: a systematic review.</title>
        <authorList>
            <person name="Misra S."/>
            <person name="Crosby M.A."/>
            <person name="Mungall C.J."/>
            <person name="Matthews B.B."/>
            <person name="Campbell K.S."/>
            <person name="Hradecky P."/>
            <person name="Huang Y."/>
            <person name="Kaminker J.S."/>
            <person name="Millburn G.H."/>
            <person name="Prochnik S.E."/>
            <person name="Smith C.D."/>
            <person name="Tupy J.L."/>
            <person name="Whitfield E.J."/>
            <person name="Bayraktaroglu L."/>
            <person name="Berman B.P."/>
            <person name="Bettencourt B.R."/>
            <person name="Celniker S.E."/>
            <person name="de Grey A.D.N.J."/>
            <person name="Drysdale R.A."/>
            <person name="Harris N.L."/>
            <person name="Richter J."/>
            <person name="Russo S."/>
            <person name="Schroeder A.J."/>
            <person name="Shu S.Q."/>
            <person name="Stapleton M."/>
            <person name="Yamada C."/>
            <person name="Ashburner M."/>
            <person name="Gelbart W.M."/>
            <person name="Rubin G.M."/>
            <person name="Lewis S.E."/>
        </authorList>
    </citation>
    <scope>GENOME REANNOTATION</scope>
    <source>
        <strain evidence="22">Berkeley</strain>
    </source>
</reference>
<reference evidence="19" key="5">
    <citation type="journal article" date="2002" name="Genome Biol.">
        <title>A Drosophila full-length cDNA resource.</title>
        <authorList>
            <person name="Stapleton M."/>
            <person name="Carlson J.W."/>
            <person name="Brokstein P."/>
            <person name="Yu C."/>
            <person name="Champe M."/>
            <person name="George R.A."/>
            <person name="Guarin H."/>
            <person name="Kronmiller B."/>
            <person name="Pacleb J.M."/>
            <person name="Park S."/>
            <person name="Wan K.H."/>
            <person name="Rubin G.M."/>
            <person name="Celniker S.E."/>
        </authorList>
    </citation>
    <scope>NUCLEOTIDE SEQUENCE [LARGE SCALE MRNA]</scope>
    <source>
        <strain evidence="19">Berkeley</strain>
        <tissue evidence="19">Embryo</tissue>
    </source>
</reference>
<reference evidence="18" key="6">
    <citation type="journal article" date="1999" name="DNA Cell Biol.">
        <title>Organization of the ferritin genes in Drosophila melanogaster.</title>
        <authorList>
            <person name="Dunkov B.C."/>
            <person name="Georgieva T."/>
        </authorList>
    </citation>
    <scope>NUCLEOTIDE SEQUENCE [GENOMIC DNA] OF 26-205</scope>
</reference>
<reference evidence="16" key="7">
    <citation type="journal article" date="2002" name="Insect Biochem. Mol. Biol.">
        <title>Drosophila melanogaster ferritin: cDNA encoding a light chain homologue, temporal and tissue specific expression of both subunit types.</title>
        <authorList>
            <person name="Georgieva T."/>
            <person name="Dunkov B.C."/>
            <person name="Dimov S."/>
            <person name="Ralchev K."/>
            <person name="Law J.H."/>
        </authorList>
    </citation>
    <scope>SUBCELLULAR LOCATION</scope>
    <scope>TISSUE SPECIFICITY</scope>
    <scope>DEVELOPMENTAL STAGE</scope>
    <scope>INDUCTION</scope>
</reference>
<reference evidence="16" key="8">
    <citation type="journal article" date="2007" name="Genetics">
        <title>Homeostatic mechanisms for iron storage revealed by genetic manipulations and live imaging of Drosophila ferritin.</title>
        <authorList>
            <person name="Missirlis F."/>
            <person name="Kosmidis S."/>
            <person name="Brody T."/>
            <person name="Mavrakis M."/>
            <person name="Holmberg S."/>
            <person name="Odenwald W.F."/>
            <person name="Skoulakis E.M."/>
            <person name="Rouault T.A."/>
        </authorList>
    </citation>
    <scope>FUNCTION</scope>
    <scope>SUBCELLULAR LOCATION</scope>
    <scope>DEVELOPMENTAL STAGE</scope>
    <scope>INDUCTION</scope>
    <scope>DISRUPTION PHENOTYPE</scope>
</reference>
<reference evidence="16" key="9">
    <citation type="journal article" date="2012" name="Metallomics">
        <title>Genes for iron metabolism influence circadian rhythms in Drosophila melanogaster.</title>
        <authorList>
            <person name="Mandilaras K."/>
            <person name="Missirlis F."/>
        </authorList>
    </citation>
    <scope>DISRUPTION PHENOTYPE</scope>
</reference>
<reference evidence="16" key="10">
    <citation type="journal article" date="2013" name="FASEB J.">
        <title>Ferritin is the key to dietary iron absorption and tissue iron detoxification in Drosophila melanogaster.</title>
        <authorList>
            <person name="Tang X."/>
            <person name="Zhou B."/>
        </authorList>
    </citation>
    <scope>FUNCTION</scope>
    <scope>TISSUE SPECIFICITY</scope>
    <scope>DEVELOPMENTAL STAGE</scope>
    <scope>DISRUPTION PHENOTYPE</scope>
</reference>
<reference evidence="16" key="11">
    <citation type="journal article" date="2013" name="Metallomics">
        <title>Biophysical and genetic analysis of iron partitioning and ferritin function in Drosophila melanogaster.</title>
        <authorList>
            <person name="Gutierrez L."/>
            <person name="Zubow K."/>
            <person name="Nield J."/>
            <person name="Gambis A."/>
            <person name="Mollereau B."/>
            <person name="Lazaro F.J."/>
            <person name="Missirlis F."/>
        </authorList>
    </citation>
    <scope>FUNCTION</scope>
    <scope>SUBUNIT</scope>
</reference>
<reference evidence="16" key="12">
    <citation type="journal article" date="2015" name="PLoS ONE">
        <title>Ferritin Is Required in Multiple Tissues during Drosophila melanogaster Development.</title>
        <authorList>
            <person name="Gonzalez-Morales N."/>
            <person name="Mendoza-Ortiz M.A."/>
            <person name="Blowes L.M."/>
            <person name="Missirlis F."/>
            <person name="Riesgo-Escovar J.R."/>
        </authorList>
    </citation>
    <scope>FUNCTION</scope>
    <scope>SUBCELLULAR LOCATION</scope>
    <scope>DEVELOPMENTAL STAGE</scope>
    <scope>INDUCTION</scope>
    <scope>DISRUPTION PHENOTYPE</scope>
</reference>
<reference evidence="16" key="13">
    <citation type="journal article" date="2017" name="Mol. Cells">
        <title>Iron Homeostasis Controls Myeloid Blood Cell Differentiation in Drosophila.</title>
        <authorList>
            <person name="Yoon S."/>
            <person name="Cho B."/>
            <person name="Shin M."/>
            <person name="Koranteng F."/>
            <person name="Cha N."/>
            <person name="Shim J."/>
        </authorList>
    </citation>
    <scope>FUNCTION</scope>
    <scope>DEVELOPMENTAL STAGE</scope>
    <scope>INDUCTION</scope>
    <scope>DISRUPTION PHENOTYPE</scope>
</reference>
<reference evidence="16" key="14">
    <citation type="journal article" date="2019" name="PLoS Genet.">
        <title>Ferritin heavy chain protects the developing wing from reactive oxygen species and ferroptosis.</title>
        <authorList>
            <person name="Mumbauer S."/>
            <person name="Pascual J."/>
            <person name="Kolotuev I."/>
            <person name="Hamaratoglu F."/>
        </authorList>
    </citation>
    <scope>FUNCTION</scope>
    <scope>DISRUPTION PHENOTYPE</scope>
</reference>
<reference evidence="16" key="15">
    <citation type="journal article" date="2020" name="PLoS Genet.">
        <authorList>
            <person name="Mumbauer S."/>
            <person name="Pascual J."/>
            <person name="Kolotuev I."/>
            <person name="Hamaratoglu F."/>
        </authorList>
    </citation>
    <scope>ERRATUM OF PUBMED:31568497</scope>
</reference>
<dbReference type="EC" id="1.16.3.1" evidence="3"/>
<dbReference type="EMBL" id="U91524">
    <property type="protein sequence ID" value="AAB70121.1"/>
    <property type="molecule type" value="mRNA"/>
</dbReference>
<dbReference type="EMBL" id="Y15629">
    <property type="protein sequence ID" value="CAA75724.1"/>
    <property type="molecule type" value="mRNA"/>
</dbReference>
<dbReference type="EMBL" id="AE014297">
    <property type="protein sequence ID" value="AAF57034.1"/>
    <property type="molecule type" value="Genomic_DNA"/>
</dbReference>
<dbReference type="EMBL" id="AE014297">
    <property type="protein sequence ID" value="AAF57035.1"/>
    <property type="molecule type" value="Genomic_DNA"/>
</dbReference>
<dbReference type="EMBL" id="AE014297">
    <property type="protein sequence ID" value="AAF57036.1"/>
    <property type="molecule type" value="Genomic_DNA"/>
</dbReference>
<dbReference type="EMBL" id="AE014297">
    <property type="protein sequence ID" value="AAF57037.1"/>
    <property type="molecule type" value="Genomic_DNA"/>
</dbReference>
<dbReference type="EMBL" id="AE014297">
    <property type="protein sequence ID" value="AHN57607.1"/>
    <property type="molecule type" value="Genomic_DNA"/>
</dbReference>
<dbReference type="EMBL" id="AE014297">
    <property type="protein sequence ID" value="AAN14227.1"/>
    <property type="status" value="ALT_FRAME"/>
    <property type="molecule type" value="Genomic_DNA"/>
</dbReference>
<dbReference type="EMBL" id="AY061831">
    <property type="protein sequence ID" value="AAL27642.1"/>
    <property type="molecule type" value="mRNA"/>
</dbReference>
<dbReference type="EMBL" id="BT001419">
    <property type="protein sequence ID" value="AAN71174.1"/>
    <property type="status" value="ALT_FRAME"/>
    <property type="molecule type" value="mRNA"/>
</dbReference>
<dbReference type="EMBL" id="BT133016">
    <property type="protein sequence ID" value="AEX91653.1"/>
    <property type="status" value="ALT_INIT"/>
    <property type="molecule type" value="mRNA"/>
</dbReference>
<dbReference type="EMBL" id="AH008382">
    <property type="protein sequence ID" value="AAF07877.1"/>
    <property type="molecule type" value="Genomic_DNA"/>
</dbReference>
<dbReference type="RefSeq" id="NP_001287608.1">
    <property type="nucleotide sequence ID" value="NM_001300679.1"/>
</dbReference>
<dbReference type="RefSeq" id="NP_524873.1">
    <property type="nucleotide sequence ID" value="NM_080134.4"/>
</dbReference>
<dbReference type="RefSeq" id="NP_733358.1">
    <property type="nucleotide sequence ID" value="NM_170479.3"/>
</dbReference>
<dbReference type="RefSeq" id="NP_733359.1">
    <property type="nucleotide sequence ID" value="NM_170480.3"/>
</dbReference>
<dbReference type="RefSeq" id="NP_733360.1">
    <property type="nucleotide sequence ID" value="NM_170481.3"/>
</dbReference>
<dbReference type="RefSeq" id="NP_733361.1">
    <property type="nucleotide sequence ID" value="NM_170482.3"/>
</dbReference>
<dbReference type="SMR" id="Q7KRU8"/>
<dbReference type="IntAct" id="Q7KRU8">
    <property type="interactions" value="60"/>
</dbReference>
<dbReference type="DNASU" id="46415"/>
<dbReference type="EnsemblMetazoa" id="FBtr0085631">
    <property type="protein sequence ID" value="FBpp0084995"/>
    <property type="gene ID" value="FBgn0015222"/>
</dbReference>
<dbReference type="EnsemblMetazoa" id="FBtr0085632">
    <property type="protein sequence ID" value="FBpp0084996"/>
    <property type="gene ID" value="FBgn0015222"/>
</dbReference>
<dbReference type="EnsemblMetazoa" id="FBtr0085633">
    <property type="protein sequence ID" value="FBpp0084997"/>
    <property type="gene ID" value="FBgn0015222"/>
</dbReference>
<dbReference type="EnsemblMetazoa" id="FBtr0085634">
    <property type="protein sequence ID" value="FBpp0084998"/>
    <property type="gene ID" value="FBgn0015222"/>
</dbReference>
<dbReference type="EnsemblMetazoa" id="FBtr0085635">
    <property type="protein sequence ID" value="FBpp0084999"/>
    <property type="gene ID" value="FBgn0015222"/>
</dbReference>
<dbReference type="EnsemblMetazoa" id="FBtr0344763">
    <property type="protein sequence ID" value="FBpp0311091"/>
    <property type="gene ID" value="FBgn0015222"/>
</dbReference>
<dbReference type="GeneID" id="46415"/>
<dbReference type="KEGG" id="dme:Dmel_CG2216"/>
<dbReference type="UCSC" id="CG2216-RA">
    <property type="organism name" value="d. melanogaster"/>
</dbReference>
<dbReference type="UCSC" id="CG2216-RE">
    <property type="organism name" value="d. melanogaster"/>
</dbReference>
<dbReference type="AGR" id="FB:FBgn0015222"/>
<dbReference type="CTD" id="46415"/>
<dbReference type="FlyBase" id="FBgn0015222">
    <property type="gene designation" value="Fer1HCH"/>
</dbReference>
<dbReference type="VEuPathDB" id="VectorBase:FBgn0015222"/>
<dbReference type="HOGENOM" id="CLU_2243296_0_0_1"/>
<dbReference type="OrthoDB" id="186462at2759"/>
<dbReference type="BioGRID-ORCS" id="46415">
    <property type="hits" value="0 hits in 1 CRISPR screen"/>
</dbReference>
<dbReference type="ChiTaRS" id="Fer1HCH">
    <property type="organism name" value="fly"/>
</dbReference>
<dbReference type="GenomeRNAi" id="46415"/>
<dbReference type="PRO" id="PR:Q7KRU8"/>
<dbReference type="Proteomes" id="UP000000803">
    <property type="component" value="Chromosome 3R"/>
</dbReference>
<dbReference type="Bgee" id="FBgn0015222">
    <property type="expression patterns" value="Expressed in adult abdominal pericardial cell (Drosophila) in dorsal vessel heart and 297 other cell types or tissues"/>
</dbReference>
<dbReference type="ExpressionAtlas" id="Q7KRU8">
    <property type="expression patterns" value="baseline and differential"/>
</dbReference>
<dbReference type="GO" id="GO:0005737">
    <property type="term" value="C:cytoplasm"/>
    <property type="evidence" value="ECO:0000318"/>
    <property type="project" value="GO_Central"/>
</dbReference>
<dbReference type="GO" id="GO:0005576">
    <property type="term" value="C:extracellular region"/>
    <property type="evidence" value="ECO:0007005"/>
    <property type="project" value="FlyBase"/>
</dbReference>
<dbReference type="GO" id="GO:0070288">
    <property type="term" value="C:ferritin complex"/>
    <property type="evidence" value="ECO:0000314"/>
    <property type="project" value="FlyBase"/>
</dbReference>
<dbReference type="GO" id="GO:0045169">
    <property type="term" value="C:fusome"/>
    <property type="evidence" value="ECO:0000314"/>
    <property type="project" value="FlyBase"/>
</dbReference>
<dbReference type="GO" id="GO:0005794">
    <property type="term" value="C:Golgi apparatus"/>
    <property type="evidence" value="ECO:0000314"/>
    <property type="project" value="FlyBase"/>
</dbReference>
<dbReference type="GO" id="GO:0008199">
    <property type="term" value="F:ferric iron binding"/>
    <property type="evidence" value="ECO:0000318"/>
    <property type="project" value="GO_Central"/>
</dbReference>
<dbReference type="GO" id="GO:0008198">
    <property type="term" value="F:ferrous iron binding"/>
    <property type="evidence" value="ECO:0000314"/>
    <property type="project" value="FlyBase"/>
</dbReference>
<dbReference type="GO" id="GO:0004322">
    <property type="term" value="F:ferroxidase activity"/>
    <property type="evidence" value="ECO:0007669"/>
    <property type="project" value="UniProtKB-EC"/>
</dbReference>
<dbReference type="GO" id="GO:0008283">
    <property type="term" value="P:cell population proliferation"/>
    <property type="evidence" value="ECO:0000314"/>
    <property type="project" value="FlyBase"/>
</dbReference>
<dbReference type="GO" id="GO:1990461">
    <property type="term" value="P:detoxification of iron ion"/>
    <property type="evidence" value="ECO:0000315"/>
    <property type="project" value="FlyBase"/>
</dbReference>
<dbReference type="GO" id="GO:0006879">
    <property type="term" value="P:intracellular iron ion homeostasis"/>
    <property type="evidence" value="ECO:0000314"/>
    <property type="project" value="FlyBase"/>
</dbReference>
<dbReference type="GO" id="GO:0098711">
    <property type="term" value="P:iron ion import across plasma membrane"/>
    <property type="evidence" value="ECO:0000315"/>
    <property type="project" value="FlyBase"/>
</dbReference>
<dbReference type="GO" id="GO:0009791">
    <property type="term" value="P:post-embryonic development"/>
    <property type="evidence" value="ECO:0000315"/>
    <property type="project" value="FlyBase"/>
</dbReference>
<dbReference type="GO" id="GO:0009620">
    <property type="term" value="P:response to fungus"/>
    <property type="evidence" value="ECO:0007007"/>
    <property type="project" value="FlyBase"/>
</dbReference>
<dbReference type="GO" id="GO:0030431">
    <property type="term" value="P:sleep"/>
    <property type="evidence" value="ECO:0000270"/>
    <property type="project" value="FlyBase"/>
</dbReference>
<dbReference type="CDD" id="cd01056">
    <property type="entry name" value="Euk_Ferritin"/>
    <property type="match status" value="1"/>
</dbReference>
<dbReference type="FunFam" id="1.20.1260.10:FF:000017">
    <property type="entry name" value="Ferritin"/>
    <property type="match status" value="1"/>
</dbReference>
<dbReference type="Gene3D" id="1.20.1260.10">
    <property type="match status" value="1"/>
</dbReference>
<dbReference type="InterPro" id="IPR001519">
    <property type="entry name" value="Ferritin"/>
</dbReference>
<dbReference type="InterPro" id="IPR012347">
    <property type="entry name" value="Ferritin-like"/>
</dbReference>
<dbReference type="InterPro" id="IPR009040">
    <property type="entry name" value="Ferritin-like_diiron"/>
</dbReference>
<dbReference type="InterPro" id="IPR009078">
    <property type="entry name" value="Ferritin-like_SF"/>
</dbReference>
<dbReference type="InterPro" id="IPR008331">
    <property type="entry name" value="Ferritin_DPS_dom"/>
</dbReference>
<dbReference type="PANTHER" id="PTHR11431">
    <property type="entry name" value="FERRITIN"/>
    <property type="match status" value="1"/>
</dbReference>
<dbReference type="PANTHER" id="PTHR11431:SF43">
    <property type="entry name" value="FERRITIN"/>
    <property type="match status" value="1"/>
</dbReference>
<dbReference type="Pfam" id="PF00210">
    <property type="entry name" value="Ferritin"/>
    <property type="match status" value="1"/>
</dbReference>
<dbReference type="SUPFAM" id="SSF47240">
    <property type="entry name" value="Ferritin-like"/>
    <property type="match status" value="1"/>
</dbReference>
<dbReference type="PROSITE" id="PS50905">
    <property type="entry name" value="FERRITIN_LIKE"/>
    <property type="match status" value="1"/>
</dbReference>
<sequence>MVKLIASLLLLAVVAQAYGDFKCSLAVPEITKDWVDMKDACIKGMRNQIQEEINASYQYLAMGAYFSRDTVNRPGFAEHFFKAAKEEREHGSKLVEYLSMRGQLTEGVSDLINVPTVAKQEWTDGAAALSDALDLEIKVTKSIRKLIQTCENKPYNHYHLVDYLTGVYLEEQLHGQRELAGKLTTLKKMMDTNGELGEFLFDKTL</sequence>
<gene>
    <name evidence="14 21" type="primary">Fer1HCH</name>
    <name evidence="14" type="synonym">HCH</name>
    <name evidence="21" type="ORF">CG2216</name>
</gene>
<accession>Q7KRU8</accession>
<accession>H1UUD2</accession>
<accession>Q7KMQ5</accession>
<accession>Q8I0T0</accession>
<keyword id="KW-0903">Direct protein sequencing</keyword>
<keyword id="KW-1015">Disulfide bond</keyword>
<keyword id="KW-0333">Golgi apparatus</keyword>
<keyword id="KW-0408">Iron</keyword>
<keyword id="KW-0409">Iron storage</keyword>
<keyword id="KW-0479">Metal-binding</keyword>
<keyword id="KW-0560">Oxidoreductase</keyword>
<keyword id="KW-1185">Reference proteome</keyword>
<keyword id="KW-0964">Secreted</keyword>
<keyword id="KW-0732">Signal</keyword>
<evidence type="ECO:0000250" key="1">
    <source>
        <dbReference type="UniProtKB" id="A0A7E5WTY7"/>
    </source>
</evidence>
<evidence type="ECO:0000255" key="2">
    <source>
        <dbReference type="PROSITE-ProRule" id="PRU00085"/>
    </source>
</evidence>
<evidence type="ECO:0000255" key="3">
    <source>
        <dbReference type="RuleBase" id="RU361145"/>
    </source>
</evidence>
<evidence type="ECO:0000269" key="4">
    <source>
    </source>
</evidence>
<evidence type="ECO:0000269" key="5">
    <source>
    </source>
</evidence>
<evidence type="ECO:0000269" key="6">
    <source>
    </source>
</evidence>
<evidence type="ECO:0000269" key="7">
    <source>
    </source>
</evidence>
<evidence type="ECO:0000269" key="8">
    <source>
    </source>
</evidence>
<evidence type="ECO:0000269" key="9">
    <source>
    </source>
</evidence>
<evidence type="ECO:0000269" key="10">
    <source>
    </source>
</evidence>
<evidence type="ECO:0000269" key="11">
    <source>
    </source>
</evidence>
<evidence type="ECO:0000269" key="12">
    <source>
    </source>
</evidence>
<evidence type="ECO:0000269" key="13">
    <source>
    </source>
</evidence>
<evidence type="ECO:0000303" key="14">
    <source>
    </source>
</evidence>
<evidence type="ECO:0000303" key="15">
    <source>
    </source>
</evidence>
<evidence type="ECO:0000305" key="16"/>
<evidence type="ECO:0000312" key="17">
    <source>
        <dbReference type="EMBL" id="AAB70121.1"/>
    </source>
</evidence>
<evidence type="ECO:0000312" key="18">
    <source>
        <dbReference type="EMBL" id="AAF07877.1"/>
    </source>
</evidence>
<evidence type="ECO:0000312" key="19">
    <source>
        <dbReference type="EMBL" id="AAL27642.1"/>
    </source>
</evidence>
<evidence type="ECO:0000312" key="20">
    <source>
        <dbReference type="EMBL" id="CAA75724.1"/>
    </source>
</evidence>
<evidence type="ECO:0000312" key="21">
    <source>
        <dbReference type="FlyBase" id="FBgn0015222"/>
    </source>
</evidence>
<evidence type="ECO:0000312" key="22">
    <source>
        <dbReference type="Proteomes" id="UP000000803"/>
    </source>
</evidence>
<organism evidence="22">
    <name type="scientific">Drosophila melanogaster</name>
    <name type="common">Fruit fly</name>
    <dbReference type="NCBI Taxonomy" id="7227"/>
    <lineage>
        <taxon>Eukaryota</taxon>
        <taxon>Metazoa</taxon>
        <taxon>Ecdysozoa</taxon>
        <taxon>Arthropoda</taxon>
        <taxon>Hexapoda</taxon>
        <taxon>Insecta</taxon>
        <taxon>Pterygota</taxon>
        <taxon>Neoptera</taxon>
        <taxon>Endopterygota</taxon>
        <taxon>Diptera</taxon>
        <taxon>Brachycera</taxon>
        <taxon>Muscomorpha</taxon>
        <taxon>Ephydroidea</taxon>
        <taxon>Drosophilidae</taxon>
        <taxon>Drosophila</taxon>
        <taxon>Sophophora</taxon>
    </lineage>
</organism>
<name>FRIH_DROME</name>
<protein>
    <recommendedName>
        <fullName evidence="15">Ferritin heavy chain</fullName>
        <ecNumber evidence="3">1.16.3.1</ecNumber>
    </recommendedName>
</protein>
<proteinExistence type="evidence at protein level"/>
<feature type="signal peptide" evidence="12">
    <location>
        <begin position="1"/>
        <end position="19"/>
    </location>
</feature>
<feature type="chain" id="PRO_5015098799" description="Ferritin heavy chain">
    <location>
        <begin position="20"/>
        <end position="205"/>
    </location>
</feature>
<feature type="domain" description="Ferritin-like diiron" evidence="2">
    <location>
        <begin position="35"/>
        <end position="190"/>
    </location>
</feature>
<feature type="binding site" evidence="1">
    <location>
        <position position="52"/>
    </location>
    <ligand>
        <name>Fe cation</name>
        <dbReference type="ChEBI" id="CHEBI:24875"/>
        <label>1</label>
    </ligand>
</feature>
<feature type="binding site" evidence="1">
    <location>
        <position position="87"/>
    </location>
    <ligand>
        <name>Fe cation</name>
        <dbReference type="ChEBI" id="CHEBI:24875"/>
        <label>1</label>
    </ligand>
</feature>
<feature type="binding site" evidence="1">
    <location>
        <position position="87"/>
    </location>
    <ligand>
        <name>Fe cation</name>
        <dbReference type="ChEBI" id="CHEBI:24875"/>
        <label>2</label>
    </ligand>
</feature>
<feature type="binding site" evidence="1">
    <location>
        <position position="90"/>
    </location>
    <ligand>
        <name>Fe cation</name>
        <dbReference type="ChEBI" id="CHEBI:24875"/>
        <label>1</label>
    </ligand>
</feature>
<feature type="binding site" evidence="1">
    <location>
        <position position="136"/>
    </location>
    <ligand>
        <name>Fe cation</name>
        <dbReference type="ChEBI" id="CHEBI:24875"/>
        <label>2</label>
    </ligand>
</feature>
<feature type="binding site" evidence="1">
    <location>
        <position position="172"/>
    </location>
    <ligand>
        <name>Fe cation</name>
        <dbReference type="ChEBI" id="CHEBI:24875"/>
        <label>2</label>
    </ligand>
</feature>
<feature type="disulfide bond" description="Interchain (with C-33 in light chain)" evidence="1">
    <location>
        <position position="23"/>
    </location>
</feature>
<feature type="disulfide bond" evidence="1">
    <location>
        <begin position="41"/>
        <end position="150"/>
    </location>
</feature>
<comment type="function">
    <text evidence="3 5 7 8 9 10 11">Stores iron in a soluble, non-toxic, readily available form (By similarity) (PubMed:23771129). Important for iron homeostasis (By similarity) (PubMed:23064556, PubMed:23771129). Iron is taken up in the ferrous form and deposited as ferric hydroxides after oxidation (By similarity) (PubMed:17603097, PubMed:23771129). Ferritin is composed of a heavy (H) chain which is responsible for the oxidation and uptake of ferrous iron, and a light (L) chain which facilitates the nucleation of the ferrihydrite iron core (PubMed:23771129). Required for dietary iron absorption in the midgut (PubMed:23064556). Involved in tissue iron detoxification by exporting excess iron (PubMed:23064556). Functions as an antioxidant and protects the developing organs from cell-mediated ferroptosis (PubMed:31568497). Required for embryo and larval development (PubMed:26192321). Plays a role in blood cell (haemocyte) differentiation in the lymph gland at the larval stage (PubMed:29237257). May also store Zn(2+) and Mn(2+) and thus may play a role in zinc and manganese homeostasis (PubMed:23771129).</text>
</comment>
<comment type="catalytic activity">
    <reaction evidence="3">
        <text>4 Fe(2+) + O2 + 4 H(+) = 4 Fe(3+) + 2 H2O</text>
        <dbReference type="Rhea" id="RHEA:11148"/>
        <dbReference type="ChEBI" id="CHEBI:15377"/>
        <dbReference type="ChEBI" id="CHEBI:15378"/>
        <dbReference type="ChEBI" id="CHEBI:15379"/>
        <dbReference type="ChEBI" id="CHEBI:29033"/>
        <dbReference type="ChEBI" id="CHEBI:29034"/>
        <dbReference type="EC" id="1.16.3.1"/>
    </reaction>
</comment>
<comment type="subunit">
    <text evidence="8 12">Oligomer of 12 light (L) chains and 12 heavy (H) chains; L and H chains are disulfide-linked (PubMed:23771129, PubMed:9266686). The functional molecule forms a roughly spherical shell with a diameter of 12 nm and contains a central cavity into which the insoluble ferric iron core is deposited (PubMed:23771129).</text>
</comment>
<comment type="subcellular location">
    <subcellularLocation>
        <location evidence="5">Golgi apparatus</location>
    </subcellularLocation>
    <subcellularLocation>
        <location evidence="4 9">Secreted</location>
    </subcellularLocation>
</comment>
<comment type="tissue specificity">
    <text evidence="4 7 13">Expressed in hemolymph and gut (at protein level) (PubMed:11804801). Expressed in the head (at protein level) (PubMed:23064556, PubMed:9801172). Expressed in thorax and abdomen (PubMed:9801172).</text>
</comment>
<comment type="developmental stage">
    <text evidence="4 5 7 9 10 13">Expressed in embryos, first, second, and third instar larvae, pupae and adults (at protein level) (PubMed:11804801, PubMed:23064556, PubMed:9801172). Expressed in the gut and hemolymph of second instar larvae, wandering larvae and early pupae (at protein level) (PubMed:11804801, PubMed:17603097). In embryos, expressed in the neuroectoderm (PubMed:26192321). Expressed in the middle part of the gut in third instar larvae (PubMed:17603097). During embryogenesis, expressed in blastoderm, in mesoderm cells during germ-band elongation that give rise to fat bodies and amnioserosa and in cells that give rise macrophages in the anterior head region (PubMed:17603097). During germ-band retraction and dorsal closure, expressed in amnioserosa (PubMed:17603097). At late stages of embryogenesis, expressed in cells in the developing midgut (PubMed:17603097). At the wandering third instar, expressed in brain hemispheres (but not in optic lobes), ventral nerve cord, fat body, pericardial cells, Garland cells, intestine, Malpighian tubules, lymph gland blood cells and circulating blood cells (PubMed:29237257).</text>
</comment>
<comment type="induction">
    <text evidence="4 5 9 10">Up-regulated by iron-supplemented diet in the anterior part of the gut of third instar larvae and adults (at protein level) (PubMed:11804801, PubMed:17603097, PubMed:26192321). Up-regulated by iron-supplemented diet in the lymph gland (PubMed:29237257).</text>
</comment>
<comment type="disruption phenotype">
    <text evidence="5 6 7 9 10 11">Embryonic lethal with some embryos displaying cuticle and nervous system defects (PubMed:17603097, PubMed:26192321). RNAi-mediated knockdown is lethal at second-instar stage at 25 degrees Celsius and first-instar stage at 29 degrees Celsius (PubMed:23064556). Reduces Fer2LCH protein levels (PubMed:23064556). RNAi-mediated knockdown in the midgut causes a growth delay and most flies die at the larval or pupal stage; lethality is partially reduced on an iron supplemented diet and enhanced in presence of the iron chelator BPS (PubMed:23064556). Few surviving adults have a smaller and shorter intestine (PubMed:23064556). Also, results in gut iron accumulation and systemic iron deficiency, reduces Mvl transcription and aconitase activity (PubMed:23064556). Also causes an increase in crystal cell differentiation in the lymph gland (PubMed:29237257). RNAi-mediated knockdown in progenitor blood cells reduces crystal cell differentiation (PubMed:29237257). RNAi-mediated knockdown in mature blood cells causes an increase in the number of crystal cells and in the lymph gland cortical zone (PubMed:29237257). RNAi-mediated knockdown in the eye results in rough eyes, necrotic black patches on eyes during aging of the flies, enlarged and malformed rhabdomere in the retina and iron accumulation in the head (PubMed:23064556). RNAi-mediated knockdown in the nervous system results in growth delay, reduced survival, non-fully developed retina and neurodegenerative vacuoles in brain (PubMed:23064556). RNAi-mediated knockdown in the wings results in small and crinkled wings (PubMed:23064556). RNAi-mediated knockdown in the wing pouch results in small adult wings or no wings and in some cases in lethality (PubMed:31568497). During larval disk development, cell death in the pouch is increased and cell proliferation rate is reduced, mitochondria are round and fragmented and levels of reactive oxygen species (ROS) are increased (PubMed:31568497). RNAi-mediated knockdown in the posterior is lethal before the third instar stage; the few survivors have small larval disks and increased number of apoptotic cells (PubMed:31568497). RNAi-mediated knockdown in embryonic epidermis and imaginal disks results is lethal at the larval stage (PubMed:23064556). RNAi-mediated knockdown in endoderm or mesoderm results in growth delay and death at the pupal stage (PubMed:23064556). RNAi-mediated knockdown in fat body or somatic muscles causes no defect (PubMed:23064556). RNAi-mediated knockdown in cry+ neurons (LNds and s-LNvs) has no effect on circadian activity in the absence of external cues (PubMed:22885802).</text>
</comment>
<comment type="similarity">
    <text evidence="3">Belongs to the ferritin family.</text>
</comment>
<comment type="sequence caution" evidence="16">
    <conflict type="frameshift">
        <sequence resource="EMBL-CDS" id="AAN14227"/>
    </conflict>
</comment>
<comment type="sequence caution" evidence="16">
    <conflict type="frameshift">
        <sequence resource="EMBL-CDS" id="AAN71174"/>
    </conflict>
</comment>
<comment type="sequence caution" evidence="16">
    <conflict type="erroneous initiation">
        <sequence resource="EMBL-CDS" id="AEX91653"/>
    </conflict>
    <text>Truncated N-terminus.</text>
</comment>